<gene>
    <name type="primary">allR</name>
    <name type="ordered locus">SPA2206</name>
</gene>
<proteinExistence type="inferred from homology"/>
<feature type="chain" id="PRO_0000313703" description="HTH-type transcriptional repressor AllR">
    <location>
        <begin position="1"/>
        <end position="272"/>
    </location>
</feature>
<feature type="domain" description="HTH iclR-type" evidence="2">
    <location>
        <begin position="21"/>
        <end position="83"/>
    </location>
</feature>
<feature type="domain" description="IclR-ED" evidence="3">
    <location>
        <begin position="98"/>
        <end position="267"/>
    </location>
</feature>
<feature type="DNA-binding region" description="H-T-H motif" evidence="2">
    <location>
        <begin position="43"/>
        <end position="62"/>
    </location>
</feature>
<feature type="region of interest" description="Disordered" evidence="4">
    <location>
        <begin position="1"/>
        <end position="20"/>
    </location>
</feature>
<feature type="binding site" evidence="1">
    <location>
        <begin position="154"/>
        <end position="156"/>
    </location>
    <ligand>
        <name>glyoxylate</name>
        <dbReference type="ChEBI" id="CHEBI:36655"/>
    </ligand>
</feature>
<feature type="binding site" evidence="1">
    <location>
        <position position="207"/>
    </location>
    <ligand>
        <name>glyoxylate</name>
        <dbReference type="ChEBI" id="CHEBI:36655"/>
    </ligand>
</feature>
<feature type="binding site" evidence="1">
    <location>
        <position position="217"/>
    </location>
    <ligand>
        <name>glyoxylate</name>
        <dbReference type="ChEBI" id="CHEBI:36655"/>
    </ligand>
</feature>
<feature type="binding site" evidence="1">
    <location>
        <begin position="234"/>
        <end position="236"/>
    </location>
    <ligand>
        <name>glyoxylate</name>
        <dbReference type="ChEBI" id="CHEBI:36655"/>
    </ligand>
</feature>
<reference key="1">
    <citation type="journal article" date="2004" name="Nat. Genet.">
        <title>Comparison of genome degradation in Paratyphi A and Typhi, human-restricted serovars of Salmonella enterica that cause typhoid.</title>
        <authorList>
            <person name="McClelland M."/>
            <person name="Sanderson K.E."/>
            <person name="Clifton S.W."/>
            <person name="Latreille P."/>
            <person name="Porwollik S."/>
            <person name="Sabo A."/>
            <person name="Meyer R."/>
            <person name="Bieri T."/>
            <person name="Ozersky P."/>
            <person name="McLellan M."/>
            <person name="Harkins C.R."/>
            <person name="Wang C."/>
            <person name="Nguyen C."/>
            <person name="Berghoff A."/>
            <person name="Elliott G."/>
            <person name="Kohlberg S."/>
            <person name="Strong C."/>
            <person name="Du F."/>
            <person name="Carter J."/>
            <person name="Kremizki C."/>
            <person name="Layman D."/>
            <person name="Leonard S."/>
            <person name="Sun H."/>
            <person name="Fulton L."/>
            <person name="Nash W."/>
            <person name="Miner T."/>
            <person name="Minx P."/>
            <person name="Delehaunty K."/>
            <person name="Fronick C."/>
            <person name="Magrini V."/>
            <person name="Nhan M."/>
            <person name="Warren W."/>
            <person name="Florea L."/>
            <person name="Spieth J."/>
            <person name="Wilson R.K."/>
        </authorList>
    </citation>
    <scope>NUCLEOTIDE SEQUENCE [LARGE SCALE GENOMIC DNA]</scope>
    <source>
        <strain>ATCC 9150 / SARB42</strain>
    </source>
</reference>
<protein>
    <recommendedName>
        <fullName>HTH-type transcriptional repressor AllR</fullName>
    </recommendedName>
    <alternativeName>
        <fullName>Negative regulator of allantoin and glyoxylate utilization operons</fullName>
    </alternativeName>
</protein>
<keyword id="KW-0238">DNA-binding</keyword>
<keyword id="KW-0678">Repressor</keyword>
<keyword id="KW-0804">Transcription</keyword>
<keyword id="KW-0805">Transcription regulation</keyword>
<dbReference type="EMBL" id="CP000026">
    <property type="protein sequence ID" value="AAV78093.1"/>
    <property type="molecule type" value="Genomic_DNA"/>
</dbReference>
<dbReference type="RefSeq" id="WP_000141265.1">
    <property type="nucleotide sequence ID" value="NC_006511.1"/>
</dbReference>
<dbReference type="SMR" id="Q5PCF5"/>
<dbReference type="KEGG" id="spt:SPA2206"/>
<dbReference type="HOGENOM" id="CLU_062618_7_1_6"/>
<dbReference type="Proteomes" id="UP000008185">
    <property type="component" value="Chromosome"/>
</dbReference>
<dbReference type="GO" id="GO:0003677">
    <property type="term" value="F:DNA binding"/>
    <property type="evidence" value="ECO:0007669"/>
    <property type="project" value="UniProtKB-KW"/>
</dbReference>
<dbReference type="GO" id="GO:0003700">
    <property type="term" value="F:DNA-binding transcription factor activity"/>
    <property type="evidence" value="ECO:0007669"/>
    <property type="project" value="TreeGrafter"/>
</dbReference>
<dbReference type="GO" id="GO:0045892">
    <property type="term" value="P:negative regulation of DNA-templated transcription"/>
    <property type="evidence" value="ECO:0007669"/>
    <property type="project" value="TreeGrafter"/>
</dbReference>
<dbReference type="FunFam" id="3.30.450.40:FF:000017">
    <property type="entry name" value="HTH-type transcriptional repressor AllR"/>
    <property type="match status" value="1"/>
</dbReference>
<dbReference type="Gene3D" id="3.30.450.40">
    <property type="match status" value="1"/>
</dbReference>
<dbReference type="Gene3D" id="1.10.10.10">
    <property type="entry name" value="Winged helix-like DNA-binding domain superfamily/Winged helix DNA-binding domain"/>
    <property type="match status" value="1"/>
</dbReference>
<dbReference type="InterPro" id="IPR029016">
    <property type="entry name" value="GAF-like_dom_sf"/>
</dbReference>
<dbReference type="InterPro" id="IPR050707">
    <property type="entry name" value="HTH_MetabolicPath_Reg"/>
</dbReference>
<dbReference type="InterPro" id="IPR014757">
    <property type="entry name" value="Tscrpt_reg_IclR_C"/>
</dbReference>
<dbReference type="InterPro" id="IPR005471">
    <property type="entry name" value="Tscrpt_reg_IclR_N"/>
</dbReference>
<dbReference type="InterPro" id="IPR036388">
    <property type="entry name" value="WH-like_DNA-bd_sf"/>
</dbReference>
<dbReference type="InterPro" id="IPR036390">
    <property type="entry name" value="WH_DNA-bd_sf"/>
</dbReference>
<dbReference type="NCBIfam" id="NF007548">
    <property type="entry name" value="PRK10163.1"/>
    <property type="match status" value="1"/>
</dbReference>
<dbReference type="PANTHER" id="PTHR30136">
    <property type="entry name" value="HELIX-TURN-HELIX TRANSCRIPTIONAL REGULATOR, ICLR FAMILY"/>
    <property type="match status" value="1"/>
</dbReference>
<dbReference type="PANTHER" id="PTHR30136:SF24">
    <property type="entry name" value="HTH-TYPE TRANSCRIPTIONAL REPRESSOR ALLR"/>
    <property type="match status" value="1"/>
</dbReference>
<dbReference type="Pfam" id="PF09339">
    <property type="entry name" value="HTH_IclR"/>
    <property type="match status" value="1"/>
</dbReference>
<dbReference type="Pfam" id="PF01614">
    <property type="entry name" value="IclR_C"/>
    <property type="match status" value="1"/>
</dbReference>
<dbReference type="SMART" id="SM00346">
    <property type="entry name" value="HTH_ICLR"/>
    <property type="match status" value="1"/>
</dbReference>
<dbReference type="SUPFAM" id="SSF55781">
    <property type="entry name" value="GAF domain-like"/>
    <property type="match status" value="1"/>
</dbReference>
<dbReference type="SUPFAM" id="SSF46785">
    <property type="entry name" value="Winged helix' DNA-binding domain"/>
    <property type="match status" value="1"/>
</dbReference>
<dbReference type="PROSITE" id="PS51077">
    <property type="entry name" value="HTH_ICLR"/>
    <property type="match status" value="1"/>
</dbReference>
<dbReference type="PROSITE" id="PS51078">
    <property type="entry name" value="ICLR_ED"/>
    <property type="match status" value="1"/>
</dbReference>
<comment type="function">
    <text evidence="1">Negative regulator of allantoin and glyoxylate utilization operons. Binds to the gcl promoter and to the allS-allA intergenic region (By similarity).</text>
</comment>
<accession>Q5PCF5</accession>
<sequence>MTEVRRRGRPGQAEPTAQKGAQALERGIAILQYLERSGGSSSVSDISGSLDLPLSTTFRLLKVLQAADFVYQDSQLGWWHIGLGVFNVGSAYIHNRDVLSVAGPFMHRLMLLSGETVNVAIRNGNEAVLIGQKECKSMVRMCAPLGSRLPLHASGAGKALLYPLTEEELVGIVVNTGLRRFTPTTLVDLPILLKNLEQAREQGYTVDQEEHVVGLNCIASAIYDDAGSVVAAISISGPASRLTEDRFISQGELVRDTAKDISTALGLKPPVA</sequence>
<evidence type="ECO:0000250" key="1"/>
<evidence type="ECO:0000255" key="2">
    <source>
        <dbReference type="PROSITE-ProRule" id="PRU00393"/>
    </source>
</evidence>
<evidence type="ECO:0000255" key="3">
    <source>
        <dbReference type="PROSITE-ProRule" id="PRU00394"/>
    </source>
</evidence>
<evidence type="ECO:0000256" key="4">
    <source>
        <dbReference type="SAM" id="MobiDB-lite"/>
    </source>
</evidence>
<organism>
    <name type="scientific">Salmonella paratyphi A (strain ATCC 9150 / SARB42)</name>
    <dbReference type="NCBI Taxonomy" id="295319"/>
    <lineage>
        <taxon>Bacteria</taxon>
        <taxon>Pseudomonadati</taxon>
        <taxon>Pseudomonadota</taxon>
        <taxon>Gammaproteobacteria</taxon>
        <taxon>Enterobacterales</taxon>
        <taxon>Enterobacteriaceae</taxon>
        <taxon>Salmonella</taxon>
    </lineage>
</organism>
<name>ALLR_SALPA</name>